<organism>
    <name type="scientific">Mus musculus</name>
    <name type="common">Mouse</name>
    <dbReference type="NCBI Taxonomy" id="10090"/>
    <lineage>
        <taxon>Eukaryota</taxon>
        <taxon>Metazoa</taxon>
        <taxon>Chordata</taxon>
        <taxon>Craniata</taxon>
        <taxon>Vertebrata</taxon>
        <taxon>Euteleostomi</taxon>
        <taxon>Mammalia</taxon>
        <taxon>Eutheria</taxon>
        <taxon>Euarchontoglires</taxon>
        <taxon>Glires</taxon>
        <taxon>Rodentia</taxon>
        <taxon>Myomorpha</taxon>
        <taxon>Muroidea</taxon>
        <taxon>Muridae</taxon>
        <taxon>Murinae</taxon>
        <taxon>Mus</taxon>
        <taxon>Mus</taxon>
    </lineage>
</organism>
<accession>P22724</accession>
<feature type="signal peptide" evidence="5">
    <location>
        <begin position="1"/>
        <end position="22"/>
    </location>
</feature>
<feature type="chain" id="PRO_0000041422" description="Protein Wnt-4">
    <location>
        <begin position="23"/>
        <end position="351"/>
    </location>
</feature>
<feature type="lipid moiety-binding region" description="O-palmitoleoyl serine; by PORCN" evidence="3">
    <location>
        <position position="212"/>
    </location>
</feature>
<feature type="glycosylation site" description="N-linked (GlcNAc...) asparagine" evidence="5">
    <location>
        <position position="88"/>
    </location>
</feature>
<feature type="glycosylation site" description="N-linked (GlcNAc...) asparagine" evidence="5">
    <location>
        <position position="297"/>
    </location>
</feature>
<feature type="disulfide bond" evidence="2">
    <location>
        <begin position="78"/>
        <end position="89"/>
    </location>
</feature>
<feature type="disulfide bond" evidence="2">
    <location>
        <begin position="128"/>
        <end position="136"/>
    </location>
</feature>
<feature type="disulfide bond" evidence="2">
    <location>
        <begin position="138"/>
        <end position="155"/>
    </location>
</feature>
<feature type="disulfide bond" evidence="2">
    <location>
        <begin position="206"/>
        <end position="220"/>
    </location>
</feature>
<feature type="disulfide bond" evidence="2">
    <location>
        <begin position="208"/>
        <end position="215"/>
    </location>
</feature>
<feature type="disulfide bond" evidence="2">
    <location>
        <begin position="280"/>
        <end position="311"/>
    </location>
</feature>
<feature type="disulfide bond" evidence="2">
    <location>
        <begin position="296"/>
        <end position="306"/>
    </location>
</feature>
<feature type="disulfide bond" evidence="2">
    <location>
        <begin position="310"/>
        <end position="350"/>
    </location>
</feature>
<feature type="disulfide bond" evidence="2">
    <location>
        <begin position="326"/>
        <end position="341"/>
    </location>
</feature>
<feature type="disulfide bond" evidence="2">
    <location>
        <begin position="328"/>
        <end position="338"/>
    </location>
</feature>
<feature type="disulfide bond" evidence="2">
    <location>
        <begin position="333"/>
        <end position="334"/>
    </location>
</feature>
<protein>
    <recommendedName>
        <fullName>Protein Wnt-4</fullName>
    </recommendedName>
</protein>
<comment type="function">
    <text evidence="7 8 9 11 12 13 14">Ligand for members of the frizzled family of seven transmembrane receptors (Probable). Plays an important role in the embryonic development of the urogenital tract and the lung (PubMed:16054034, PubMed:17537789, PubMed:19830824, PubMed:26321050, PubMed:7990960, PubMed:9989404). Required for normal mesenchyme to epithelium transition during embryonic kidney development (PubMed:16054034, PubMed:17537789, PubMed:19830824, PubMed:7990960). Required for the formation of early epithelial renal vesicles during kidney development (PubMed:16054034). Required for normal formation of the Mullerian duct in females, and normal levels of oocytes in the ovaries (PubMed:19830824, PubMed:9989404). Required for normal down-regulation of 3 beta-hydroxysteroid dehydrogenase in the ovary (PubMed:9989404). Required for normal lung development and for normal patterning of trachael cartilage rings (PubMed:26321050).</text>
</comment>
<comment type="subunit">
    <text evidence="4 6">Interacts with PORCN (PubMed:10866835). Interacts with PKD1 (By similarity).</text>
</comment>
<comment type="interaction">
    <interactant intactId="EBI-1570945">
        <id>P22724</id>
    </interactant>
    <interactant intactId="EBI-1570828">
        <id>O35082</id>
        <label>Kl</label>
    </interactant>
    <organismsDiffer>false</organismsDiffer>
    <experiments>2</experiments>
</comment>
<comment type="subcellular location">
    <subcellularLocation>
        <location>Secreted</location>
        <location>Extracellular space</location>
        <location>Extracellular matrix</location>
    </subcellularLocation>
</comment>
<comment type="tissue specificity">
    <text evidence="10">In adults in lung and brain.</text>
</comment>
<comment type="developmental stage">
    <text evidence="12 13">Detected along the length of the mesonephros at 9.5 to 10.5 dpc. At 11.0 dpc, detected in the mesenchyme of the gonads in both sexes and in mesonephros. At 11.5 dpc, sex-specific differentiation of the gonads begins, and Wnt4 is down-regulated in male gonads, but not in female gonads. Detected in mesenchyme cells underlying the newly formed Mullerian duct in females, but not in the Wolffian duct in males (PubMed:9989404). During kidney development, detected at 11.5 dpc in condensed mesenchymal cells on both sides of the stalk of the ureter. Detected on pretubular aggregates upon initiation of ureteric bud branching at 12.5 dpc. Detected on primitive tubular aggregates at 13.5 dpc. Detected on comma-shaped and S-shaped bodies by 14.5 dpc, and is restricted to kidney cortex by 16.5 dpc (PubMed:7990960).</text>
</comment>
<comment type="PTM">
    <text evidence="1 3">Palmitoleoylation is required for efficient binding to frizzled receptors. Depalmitoleoylation leads to Wnt signaling pathway inhibition.</text>
</comment>
<comment type="disruption phenotype">
    <text evidence="9 11 12 13">Mutant embryos show normal early stages of kidney development, but later stages of kidney development are disrupted (PubMed:19830824, PubMed:7990960). Mutant embryos develop to term, but the pups die within 24 hours after birth, probably due to the absence of functional kidneys (PubMed:7990960). Reproductive organs in newborn males appear normal (PubMed:9989404). External genitalia from newborn females appear normal, but they lack a Mullerian duct and their gonads and sex ducts appear masculinized (PubMed:19830824, PubMed:9989404). Their ovaries contain less than 10% of the normal number of oocytes, and these are in the process of degenerating (PubMed:9989404). Mutant embryos display altered patterning of tracheal cartilage rings. By 13.5 dpc the size of their lungs is significantly reduced, and at 17.5 dpc the left lung lobe is on average 35% smaller than for wild-type (PubMed:26321050).</text>
</comment>
<comment type="similarity">
    <text evidence="14">Belongs to the Wnt family.</text>
</comment>
<name>WNT4_MOUSE</name>
<gene>
    <name type="primary">Wnt4</name>
    <name type="synonym">Wnt-4</name>
</gene>
<evidence type="ECO:0000250" key="1">
    <source>
        <dbReference type="UniProtKB" id="P27467"/>
    </source>
</evidence>
<evidence type="ECO:0000250" key="2">
    <source>
        <dbReference type="UniProtKB" id="P28026"/>
    </source>
</evidence>
<evidence type="ECO:0000250" key="3">
    <source>
        <dbReference type="UniProtKB" id="P56704"/>
    </source>
</evidence>
<evidence type="ECO:0000250" key="4">
    <source>
        <dbReference type="UniProtKB" id="P56705"/>
    </source>
</evidence>
<evidence type="ECO:0000255" key="5"/>
<evidence type="ECO:0000269" key="6">
    <source>
    </source>
</evidence>
<evidence type="ECO:0000269" key="7">
    <source>
    </source>
</evidence>
<evidence type="ECO:0000269" key="8">
    <source>
    </source>
</evidence>
<evidence type="ECO:0000269" key="9">
    <source>
    </source>
</evidence>
<evidence type="ECO:0000269" key="10">
    <source>
    </source>
</evidence>
<evidence type="ECO:0000269" key="11">
    <source>
    </source>
</evidence>
<evidence type="ECO:0000269" key="12">
    <source>
    </source>
</evidence>
<evidence type="ECO:0000269" key="13">
    <source>
    </source>
</evidence>
<evidence type="ECO:0000305" key="14"/>
<dbReference type="EMBL" id="M89797">
    <property type="protein sequence ID" value="AAA40566.1"/>
    <property type="molecule type" value="mRNA"/>
</dbReference>
<dbReference type="CCDS" id="CCDS18815.1"/>
<dbReference type="PIR" id="C36470">
    <property type="entry name" value="C36470"/>
</dbReference>
<dbReference type="RefSeq" id="NP_033549.1">
    <property type="nucleotide sequence ID" value="NM_009523.2"/>
</dbReference>
<dbReference type="SMR" id="P22724"/>
<dbReference type="BioGRID" id="204576">
    <property type="interactions" value="4"/>
</dbReference>
<dbReference type="FunCoup" id="P22724">
    <property type="interactions" value="499"/>
</dbReference>
<dbReference type="IntAct" id="P22724">
    <property type="interactions" value="3"/>
</dbReference>
<dbReference type="MINT" id="P22724"/>
<dbReference type="STRING" id="10090.ENSMUSP00000036580"/>
<dbReference type="GlyCosmos" id="P22724">
    <property type="glycosylation" value="2 sites, No reported glycans"/>
</dbReference>
<dbReference type="GlyGen" id="P22724">
    <property type="glycosylation" value="3 sites, 1 N-linked glycan (1 site)"/>
</dbReference>
<dbReference type="PhosphoSitePlus" id="P22724"/>
<dbReference type="PaxDb" id="10090-ENSMUSP00000036580"/>
<dbReference type="ProteomicsDB" id="299794"/>
<dbReference type="Antibodypedia" id="2555">
    <property type="antibodies" value="460 antibodies from 36 providers"/>
</dbReference>
<dbReference type="DNASU" id="22417"/>
<dbReference type="Ensembl" id="ENSMUST00000045747.5">
    <property type="protein sequence ID" value="ENSMUSP00000036580.5"/>
    <property type="gene ID" value="ENSMUSG00000036856.5"/>
</dbReference>
<dbReference type="GeneID" id="22417"/>
<dbReference type="KEGG" id="mmu:22417"/>
<dbReference type="UCSC" id="uc008viv.2">
    <property type="organism name" value="mouse"/>
</dbReference>
<dbReference type="AGR" id="MGI:98957"/>
<dbReference type="CTD" id="54361"/>
<dbReference type="MGI" id="MGI:98957">
    <property type="gene designation" value="Wnt4"/>
</dbReference>
<dbReference type="VEuPathDB" id="HostDB:ENSMUSG00000036856"/>
<dbReference type="eggNOG" id="KOG3913">
    <property type="taxonomic scope" value="Eukaryota"/>
</dbReference>
<dbReference type="GeneTree" id="ENSGT00940000159654"/>
<dbReference type="HOGENOM" id="CLU_033039_1_0_1"/>
<dbReference type="InParanoid" id="P22724"/>
<dbReference type="OMA" id="NFEWSGC"/>
<dbReference type="OrthoDB" id="5945655at2759"/>
<dbReference type="PhylomeDB" id="P22724"/>
<dbReference type="TreeFam" id="TF105310"/>
<dbReference type="Reactome" id="R-MMU-3238698">
    <property type="pathway name" value="WNT ligand biogenesis and trafficking"/>
</dbReference>
<dbReference type="Reactome" id="R-MMU-4086400">
    <property type="pathway name" value="PCP/CE pathway"/>
</dbReference>
<dbReference type="BioGRID-ORCS" id="22417">
    <property type="hits" value="3 hits in 77 CRISPR screens"/>
</dbReference>
<dbReference type="PRO" id="PR:P22724"/>
<dbReference type="Proteomes" id="UP000000589">
    <property type="component" value="Chromosome 4"/>
</dbReference>
<dbReference type="RNAct" id="P22724">
    <property type="molecule type" value="protein"/>
</dbReference>
<dbReference type="Bgee" id="ENSMUSG00000036856">
    <property type="expression patterns" value="Expressed in inner medulla of kidney and 268 other cell types or tissues"/>
</dbReference>
<dbReference type="ExpressionAtlas" id="P22724">
    <property type="expression patterns" value="baseline and differential"/>
</dbReference>
<dbReference type="GO" id="GO:0009986">
    <property type="term" value="C:cell surface"/>
    <property type="evidence" value="ECO:0000314"/>
    <property type="project" value="BHF-UCL"/>
</dbReference>
<dbReference type="GO" id="GO:0005737">
    <property type="term" value="C:cytoplasm"/>
    <property type="evidence" value="ECO:0000250"/>
    <property type="project" value="UniProtKB"/>
</dbReference>
<dbReference type="GO" id="GO:0005788">
    <property type="term" value="C:endoplasmic reticulum lumen"/>
    <property type="evidence" value="ECO:0000304"/>
    <property type="project" value="Reactome"/>
</dbReference>
<dbReference type="GO" id="GO:0031012">
    <property type="term" value="C:extracellular matrix"/>
    <property type="evidence" value="ECO:0000314"/>
    <property type="project" value="MGI"/>
</dbReference>
<dbReference type="GO" id="GO:0005576">
    <property type="term" value="C:extracellular region"/>
    <property type="evidence" value="ECO:0000304"/>
    <property type="project" value="Reactome"/>
</dbReference>
<dbReference type="GO" id="GO:0005615">
    <property type="term" value="C:extracellular space"/>
    <property type="evidence" value="ECO:0000314"/>
    <property type="project" value="BHF-UCL"/>
</dbReference>
<dbReference type="GO" id="GO:0005109">
    <property type="term" value="F:frizzled binding"/>
    <property type="evidence" value="ECO:0000353"/>
    <property type="project" value="BHF-UCL"/>
</dbReference>
<dbReference type="GO" id="GO:0048018">
    <property type="term" value="F:receptor ligand activity"/>
    <property type="evidence" value="ECO:0007669"/>
    <property type="project" value="Ensembl"/>
</dbReference>
<dbReference type="GO" id="GO:0005102">
    <property type="term" value="F:signaling receptor binding"/>
    <property type="evidence" value="ECO:0000304"/>
    <property type="project" value="MGI"/>
</dbReference>
<dbReference type="GO" id="GO:0003714">
    <property type="term" value="F:transcription corepressor activity"/>
    <property type="evidence" value="ECO:0000314"/>
    <property type="project" value="UniProtKB"/>
</dbReference>
<dbReference type="GO" id="GO:0030325">
    <property type="term" value="P:adrenal gland development"/>
    <property type="evidence" value="ECO:0007669"/>
    <property type="project" value="Ensembl"/>
</dbReference>
<dbReference type="GO" id="GO:0097190">
    <property type="term" value="P:apoptotic signaling pathway"/>
    <property type="evidence" value="ECO:0000316"/>
    <property type="project" value="MGI"/>
</dbReference>
<dbReference type="GO" id="GO:0001658">
    <property type="term" value="P:branching involved in ureteric bud morphogenesis"/>
    <property type="evidence" value="ECO:0000315"/>
    <property type="project" value="MGI"/>
</dbReference>
<dbReference type="GO" id="GO:0048754">
    <property type="term" value="P:branching morphogenesis of an epithelial tube"/>
    <property type="evidence" value="ECO:0000316"/>
    <property type="project" value="MGI"/>
</dbReference>
<dbReference type="GO" id="GO:0060070">
    <property type="term" value="P:canonical Wnt signaling pathway"/>
    <property type="evidence" value="ECO:0000314"/>
    <property type="project" value="BHF-UCL"/>
</dbReference>
<dbReference type="GO" id="GO:0030154">
    <property type="term" value="P:cell differentiation"/>
    <property type="evidence" value="ECO:0000315"/>
    <property type="project" value="MGI"/>
</dbReference>
<dbReference type="GO" id="GO:0045165">
    <property type="term" value="P:cell fate commitment"/>
    <property type="evidence" value="ECO:0000315"/>
    <property type="project" value="MGI"/>
</dbReference>
<dbReference type="GO" id="GO:0007267">
    <property type="term" value="P:cell-cell signaling"/>
    <property type="evidence" value="ECO:0000304"/>
    <property type="project" value="MGI"/>
</dbReference>
<dbReference type="GO" id="GO:0009267">
    <property type="term" value="P:cellular response to starvation"/>
    <property type="evidence" value="ECO:0000270"/>
    <property type="project" value="MGI"/>
</dbReference>
<dbReference type="GO" id="GO:0071560">
    <property type="term" value="P:cellular response to transforming growth factor beta stimulus"/>
    <property type="evidence" value="ECO:0007669"/>
    <property type="project" value="Ensembl"/>
</dbReference>
<dbReference type="GO" id="GO:0001838">
    <property type="term" value="P:embryonic epithelial tube formation"/>
    <property type="evidence" value="ECO:0000314"/>
    <property type="project" value="MGI"/>
</dbReference>
<dbReference type="GO" id="GO:0001837">
    <property type="term" value="P:epithelial to mesenchymal transition"/>
    <property type="evidence" value="ECO:0007669"/>
    <property type="project" value="Ensembl"/>
</dbReference>
<dbReference type="GO" id="GO:0008585">
    <property type="term" value="P:female gonad development"/>
    <property type="evidence" value="ECO:0000315"/>
    <property type="project" value="MGI"/>
</dbReference>
<dbReference type="GO" id="GO:0030237">
    <property type="term" value="P:female sex determination"/>
    <property type="evidence" value="ECO:0000250"/>
    <property type="project" value="UniProtKB"/>
</dbReference>
<dbReference type="GO" id="GO:0008543">
    <property type="term" value="P:fibroblast growth factor receptor signaling pathway"/>
    <property type="evidence" value="ECO:0000316"/>
    <property type="project" value="MGI"/>
</dbReference>
<dbReference type="GO" id="GO:0007276">
    <property type="term" value="P:gamete generation"/>
    <property type="evidence" value="ECO:0000316"/>
    <property type="project" value="MGI"/>
</dbReference>
<dbReference type="GO" id="GO:0042445">
    <property type="term" value="P:hormone metabolic process"/>
    <property type="evidence" value="ECO:0000315"/>
    <property type="project" value="MGI"/>
</dbReference>
<dbReference type="GO" id="GO:0033080">
    <property type="term" value="P:immature T cell proliferation in thymus"/>
    <property type="evidence" value="ECO:0000315"/>
    <property type="project" value="MGI"/>
</dbReference>
<dbReference type="GO" id="GO:0060993">
    <property type="term" value="P:kidney morphogenesis"/>
    <property type="evidence" value="ECO:0000316"/>
    <property type="project" value="MGI"/>
</dbReference>
<dbReference type="GO" id="GO:0001889">
    <property type="term" value="P:liver development"/>
    <property type="evidence" value="ECO:0007669"/>
    <property type="project" value="Ensembl"/>
</dbReference>
<dbReference type="GO" id="GO:0008584">
    <property type="term" value="P:male gonad development"/>
    <property type="evidence" value="ECO:0000315"/>
    <property type="project" value="MGI"/>
</dbReference>
<dbReference type="GO" id="GO:0140013">
    <property type="term" value="P:meiotic nuclear division"/>
    <property type="evidence" value="ECO:0000316"/>
    <property type="project" value="MGI"/>
</dbReference>
<dbReference type="GO" id="GO:0060231">
    <property type="term" value="P:mesenchymal to epithelial transition"/>
    <property type="evidence" value="ECO:0000315"/>
    <property type="project" value="MGI"/>
</dbReference>
<dbReference type="GO" id="GO:0072164">
    <property type="term" value="P:mesonephric tubule development"/>
    <property type="evidence" value="ECO:0000316"/>
    <property type="project" value="MGI"/>
</dbReference>
<dbReference type="GO" id="GO:0001823">
    <property type="term" value="P:mesonephros development"/>
    <property type="evidence" value="ECO:0000315"/>
    <property type="project" value="UniProtKB"/>
</dbReference>
<dbReference type="GO" id="GO:0072162">
    <property type="term" value="P:metanephric mesenchymal cell differentiation"/>
    <property type="evidence" value="ECO:0000303"/>
    <property type="project" value="UniProtKB"/>
</dbReference>
<dbReference type="GO" id="GO:0072210">
    <property type="term" value="P:metanephric nephron development"/>
    <property type="evidence" value="ECO:0000315"/>
    <property type="project" value="MGI"/>
</dbReference>
<dbReference type="GO" id="GO:0072273">
    <property type="term" value="P:metanephric nephron morphogenesis"/>
    <property type="evidence" value="ECO:0000315"/>
    <property type="project" value="MGI"/>
</dbReference>
<dbReference type="GO" id="GO:0072174">
    <property type="term" value="P:metanephric tubule formation"/>
    <property type="evidence" value="ECO:0000315"/>
    <property type="project" value="MGI"/>
</dbReference>
<dbReference type="GO" id="GO:0001656">
    <property type="term" value="P:metanephros development"/>
    <property type="evidence" value="ECO:0000315"/>
    <property type="project" value="MGI"/>
</dbReference>
<dbReference type="GO" id="GO:2000180">
    <property type="term" value="P:negative regulation of androgen biosynthetic process"/>
    <property type="evidence" value="ECO:0000250"/>
    <property type="project" value="UniProtKB"/>
</dbReference>
<dbReference type="GO" id="GO:2001234">
    <property type="term" value="P:negative regulation of apoptotic signaling pathway"/>
    <property type="evidence" value="ECO:0000316"/>
    <property type="project" value="MGI"/>
</dbReference>
<dbReference type="GO" id="GO:0045596">
    <property type="term" value="P:negative regulation of cell differentiation"/>
    <property type="evidence" value="ECO:0000315"/>
    <property type="project" value="MGI"/>
</dbReference>
<dbReference type="GO" id="GO:0030336">
    <property type="term" value="P:negative regulation of cell migration"/>
    <property type="evidence" value="ECO:0000316"/>
    <property type="project" value="BHF-UCL"/>
</dbReference>
<dbReference type="GO" id="GO:0045892">
    <property type="term" value="P:negative regulation of DNA-templated transcription"/>
    <property type="evidence" value="ECO:0000314"/>
    <property type="project" value="UniProtKB"/>
</dbReference>
<dbReference type="GO" id="GO:0040037">
    <property type="term" value="P:negative regulation of fibroblast growth factor receptor signaling pathway"/>
    <property type="evidence" value="ECO:0000316"/>
    <property type="project" value="MGI"/>
</dbReference>
<dbReference type="GO" id="GO:0010629">
    <property type="term" value="P:negative regulation of gene expression"/>
    <property type="evidence" value="ECO:0000315"/>
    <property type="project" value="MGI"/>
</dbReference>
<dbReference type="GO" id="GO:2000019">
    <property type="term" value="P:negative regulation of male gonad development"/>
    <property type="evidence" value="ECO:0000250"/>
    <property type="project" value="UniProtKB"/>
</dbReference>
<dbReference type="GO" id="GO:0046580">
    <property type="term" value="P:negative regulation of Ras protein signal transduction"/>
    <property type="evidence" value="ECO:0000316"/>
    <property type="project" value="BHF-UCL"/>
</dbReference>
<dbReference type="GO" id="GO:0010894">
    <property type="term" value="P:negative regulation of steroid biosynthetic process"/>
    <property type="evidence" value="ECO:0000250"/>
    <property type="project" value="UniProtKB"/>
</dbReference>
<dbReference type="GO" id="GO:0061369">
    <property type="term" value="P:negative regulation of testicular blood vessel morphogenesis"/>
    <property type="evidence" value="ECO:0007669"/>
    <property type="project" value="Ensembl"/>
</dbReference>
<dbReference type="GO" id="GO:2000225">
    <property type="term" value="P:negative regulation of testosterone biosynthetic process"/>
    <property type="evidence" value="ECO:0000315"/>
    <property type="project" value="UniProtKB"/>
</dbReference>
<dbReference type="GO" id="GO:0061045">
    <property type="term" value="P:negative regulation of wound healing"/>
    <property type="evidence" value="ECO:0000316"/>
    <property type="project" value="BHF-UCL"/>
</dbReference>
<dbReference type="GO" id="GO:0072006">
    <property type="term" value="P:nephron development"/>
    <property type="evidence" value="ECO:0000315"/>
    <property type="project" value="MGI"/>
</dbReference>
<dbReference type="GO" id="GO:0035567">
    <property type="term" value="P:non-canonical Wnt signaling pathway"/>
    <property type="evidence" value="ECO:0000314"/>
    <property type="project" value="MGI"/>
</dbReference>
<dbReference type="GO" id="GO:0048599">
    <property type="term" value="P:oocyte development"/>
    <property type="evidence" value="ECO:0000315"/>
    <property type="project" value="MGI"/>
</dbReference>
<dbReference type="GO" id="GO:0061205">
    <property type="term" value="P:paramesonephric duct development"/>
    <property type="evidence" value="ECO:0000315"/>
    <property type="project" value="UniProtKB"/>
</dbReference>
<dbReference type="GO" id="GO:1904238">
    <property type="term" value="P:pericyte cell differentiation"/>
    <property type="evidence" value="ECO:0000314"/>
    <property type="project" value="MGI"/>
</dbReference>
<dbReference type="GO" id="GO:0032349">
    <property type="term" value="P:positive regulation of aldosterone biosynthetic process"/>
    <property type="evidence" value="ECO:0000250"/>
    <property type="project" value="UniProtKB"/>
</dbReference>
<dbReference type="GO" id="GO:0030501">
    <property type="term" value="P:positive regulation of bone mineralization"/>
    <property type="evidence" value="ECO:0000250"/>
    <property type="project" value="UniProtKB"/>
</dbReference>
<dbReference type="GO" id="GO:0032967">
    <property type="term" value="P:positive regulation of collagen biosynthetic process"/>
    <property type="evidence" value="ECO:0000250"/>
    <property type="project" value="UniProtKB"/>
</dbReference>
<dbReference type="GO" id="GO:2000066">
    <property type="term" value="P:positive regulation of cortisol biosynthetic process"/>
    <property type="evidence" value="ECO:0000250"/>
    <property type="project" value="UniProtKB"/>
</dbReference>
<dbReference type="GO" id="GO:0061184">
    <property type="term" value="P:positive regulation of dermatome development"/>
    <property type="evidence" value="ECO:0000250"/>
    <property type="project" value="UniProtKB"/>
</dbReference>
<dbReference type="GO" id="GO:0045893">
    <property type="term" value="P:positive regulation of DNA-templated transcription"/>
    <property type="evidence" value="ECO:0000314"/>
    <property type="project" value="UniProtKB"/>
</dbReference>
<dbReference type="GO" id="GO:0051894">
    <property type="term" value="P:positive regulation of focal adhesion assembly"/>
    <property type="evidence" value="ECO:0000316"/>
    <property type="project" value="BHF-UCL"/>
</dbReference>
<dbReference type="GO" id="GO:0043410">
    <property type="term" value="P:positive regulation of MAPK cascade"/>
    <property type="evidence" value="ECO:0007669"/>
    <property type="project" value="Ensembl"/>
</dbReference>
<dbReference type="GO" id="GO:0045836">
    <property type="term" value="P:positive regulation of meiotic nuclear division"/>
    <property type="evidence" value="ECO:0000316"/>
    <property type="project" value="MGI"/>
</dbReference>
<dbReference type="GO" id="GO:0045669">
    <property type="term" value="P:positive regulation of osteoblast differentiation"/>
    <property type="evidence" value="ECO:0000250"/>
    <property type="project" value="UniProtKB"/>
</dbReference>
<dbReference type="GO" id="GO:0051496">
    <property type="term" value="P:positive regulation of stress fiber assembly"/>
    <property type="evidence" value="ECO:0000316"/>
    <property type="project" value="BHF-UCL"/>
</dbReference>
<dbReference type="GO" id="GO:0022407">
    <property type="term" value="P:regulation of cell-cell adhesion"/>
    <property type="evidence" value="ECO:0000315"/>
    <property type="project" value="MGI"/>
</dbReference>
<dbReference type="GO" id="GO:0072033">
    <property type="term" value="P:renal vesicle formation"/>
    <property type="evidence" value="ECO:0000315"/>
    <property type="project" value="MGI"/>
</dbReference>
<dbReference type="GO" id="GO:0072034">
    <property type="term" value="P:renal vesicle induction"/>
    <property type="evidence" value="ECO:0000314"/>
    <property type="project" value="MGI"/>
</dbReference>
<dbReference type="GO" id="GO:0060008">
    <property type="term" value="P:Sertoli cell differentiation"/>
    <property type="evidence" value="ECO:0000315"/>
    <property type="project" value="MGI"/>
</dbReference>
<dbReference type="GO" id="GO:0007548">
    <property type="term" value="P:sex differentiation"/>
    <property type="evidence" value="ECO:0000315"/>
    <property type="project" value="MGI"/>
</dbReference>
<dbReference type="GO" id="GO:0007165">
    <property type="term" value="P:signal transduction"/>
    <property type="evidence" value="ECO:0000304"/>
    <property type="project" value="MGI"/>
</dbReference>
<dbReference type="GO" id="GO:0051145">
    <property type="term" value="P:smooth muscle cell differentiation"/>
    <property type="evidence" value="ECO:0000314"/>
    <property type="project" value="MGI"/>
</dbReference>
<dbReference type="GO" id="GO:0060126">
    <property type="term" value="P:somatotropin secreting cell differentiation"/>
    <property type="evidence" value="ECO:0000315"/>
    <property type="project" value="MGI"/>
</dbReference>
<dbReference type="GO" id="GO:0033077">
    <property type="term" value="P:T cell differentiation in thymus"/>
    <property type="evidence" value="ECO:0000314"/>
    <property type="project" value="MGI"/>
</dbReference>
<dbReference type="GO" id="GO:0060748">
    <property type="term" value="P:tertiary branching involved in mammary gland duct morphogenesis"/>
    <property type="evidence" value="ECO:0000315"/>
    <property type="project" value="MGI"/>
</dbReference>
<dbReference type="GO" id="GO:0060129">
    <property type="term" value="P:thyroid-stimulating hormone-secreting cell differentiation"/>
    <property type="evidence" value="ECO:0000315"/>
    <property type="project" value="MGI"/>
</dbReference>
<dbReference type="GO" id="GO:0035239">
    <property type="term" value="P:tube morphogenesis"/>
    <property type="evidence" value="ECO:0000315"/>
    <property type="project" value="MGI"/>
</dbReference>
<dbReference type="GO" id="GO:0016055">
    <property type="term" value="P:Wnt signaling pathway"/>
    <property type="evidence" value="ECO:0000314"/>
    <property type="project" value="BHF-UCL"/>
</dbReference>
<dbReference type="CDD" id="cd19336">
    <property type="entry name" value="Wnt_Wnt4"/>
    <property type="match status" value="1"/>
</dbReference>
<dbReference type="FunFam" id="3.30.2460.20:FF:000001">
    <property type="entry name" value="Wnt homolog"/>
    <property type="match status" value="1"/>
</dbReference>
<dbReference type="Gene3D" id="3.30.2460.20">
    <property type="match status" value="1"/>
</dbReference>
<dbReference type="InterPro" id="IPR005817">
    <property type="entry name" value="Wnt"/>
</dbReference>
<dbReference type="InterPro" id="IPR009142">
    <property type="entry name" value="Wnt4"/>
</dbReference>
<dbReference type="InterPro" id="IPR043158">
    <property type="entry name" value="Wnt_C"/>
</dbReference>
<dbReference type="InterPro" id="IPR018161">
    <property type="entry name" value="Wnt_CS"/>
</dbReference>
<dbReference type="PANTHER" id="PTHR12027:SF101">
    <property type="entry name" value="PROTEIN WNT-4"/>
    <property type="match status" value="1"/>
</dbReference>
<dbReference type="PANTHER" id="PTHR12027">
    <property type="entry name" value="WNT RELATED"/>
    <property type="match status" value="1"/>
</dbReference>
<dbReference type="Pfam" id="PF00110">
    <property type="entry name" value="wnt"/>
    <property type="match status" value="1"/>
</dbReference>
<dbReference type="PRINTS" id="PR01844">
    <property type="entry name" value="WNT4PROTEIN"/>
</dbReference>
<dbReference type="PRINTS" id="PR01349">
    <property type="entry name" value="WNTPROTEIN"/>
</dbReference>
<dbReference type="SMART" id="SM00097">
    <property type="entry name" value="WNT1"/>
    <property type="match status" value="1"/>
</dbReference>
<dbReference type="PROSITE" id="PS00246">
    <property type="entry name" value="WNT1"/>
    <property type="match status" value="1"/>
</dbReference>
<sequence length="351" mass="39050">MSPRSCLRSLRLLVFAVFSAAASNWLYLAKLSSVGSISEEETCEKLKGLIQRQVQMCKRNLEVMDSVRRGAQLAIEECQYQFRNRRWNCSTLDSLPVFGKVVTQGTREAAFVYAISSAGVAFAVTRACSSGELEKCGCDRTVHGVSPQGFQWSGCSDNIAYGVAFSQSFVDVRERSKGASSSRALMNLHNNEAGRKAILTHMRVECKCHGVSGSCEVKTCWRAVPPFRQVGHALKEKFDGATEVEPRRVGSSRALVPRNAQFKPHTDEDLVYLEPSPDFCEQDIRSGVLGTRGRTCNKTSKAIDGCELLCCGRGFHTAQVELAERCGCRFHWCCFVKCRQCQRLVEMHTCR</sequence>
<keyword id="KW-0217">Developmental protein</keyword>
<keyword id="KW-1015">Disulfide bond</keyword>
<keyword id="KW-0272">Extracellular matrix</keyword>
<keyword id="KW-0325">Glycoprotein</keyword>
<keyword id="KW-0449">Lipoprotein</keyword>
<keyword id="KW-1185">Reference proteome</keyword>
<keyword id="KW-0964">Secreted</keyword>
<keyword id="KW-0732">Signal</keyword>
<keyword id="KW-0879">Wnt signaling pathway</keyword>
<reference key="1">
    <citation type="journal article" date="1990" name="Genes Dev.">
        <title>Expression of multiple novel Wnt-1/int-1-related genes during fetal and adult mouse development.</title>
        <authorList>
            <person name="Gavin B.J."/>
            <person name="McMahon J.A."/>
            <person name="McMahon A.P."/>
        </authorList>
    </citation>
    <scope>NUCLEOTIDE SEQUENCE [MRNA]</scope>
    <scope>TISSUE SPECIFICITY</scope>
</reference>
<reference key="2">
    <citation type="journal article" date="1994" name="Nature">
        <title>Epithelial transformation of metanephric mesenchyme in the developing kidney regulated by Wnt-4.</title>
        <authorList>
            <person name="Stark K."/>
            <person name="Vainio S."/>
            <person name="Vassileva G."/>
            <person name="McMahon A.P."/>
        </authorList>
    </citation>
    <scope>FUNCTION</scope>
    <scope>DISRUPTION PHENOTYPE</scope>
    <scope>DEVELOPMENTAL STAGE</scope>
</reference>
<reference key="3">
    <citation type="journal article" date="1999" name="Nature">
        <title>Female development in mammals is regulated by Wnt-4 signalling.</title>
        <authorList>
            <person name="Vainio S."/>
            <person name="Heikkilae M."/>
            <person name="Kispert A."/>
            <person name="Chin N."/>
            <person name="McMahon A.P."/>
        </authorList>
    </citation>
    <scope>FUNCTION</scope>
    <scope>DISRUPTION PHENOTYPE</scope>
    <scope>DEVELOPMENTAL STAGE</scope>
</reference>
<reference key="4">
    <citation type="journal article" date="2000" name="Eur. J. Biochem.">
        <title>The evolutionarily conserved porcupine gene family is involved in the processing of the Wnt family.</title>
        <authorList>
            <person name="Tanaka K."/>
            <person name="Okabayashi H."/>
            <person name="Asashima M."/>
            <person name="Perrimon N."/>
            <person name="Kadowaki T."/>
        </authorList>
    </citation>
    <scope>INTERACTION WITH PORCN</scope>
</reference>
<reference key="5">
    <citation type="journal article" date="2005" name="Dev. Cell">
        <title>Wnt9b plays a central role in the regulation of mesenchymal to epithelial transitions underlying organogenesis of the mammalian urogenital system.</title>
        <authorList>
            <person name="Carroll T.J."/>
            <person name="Park J.S."/>
            <person name="Hayashi S."/>
            <person name="Majumdar A."/>
            <person name="McMahon A.P."/>
        </authorList>
    </citation>
    <scope>FUNCTION</scope>
</reference>
<reference key="6">
    <citation type="journal article" date="2007" name="Development">
        <title>Wnt/beta-catenin signaling regulates nephron induction during mouse kidney development.</title>
        <authorList>
            <person name="Park J.S."/>
            <person name="Valerius M.T."/>
            <person name="McMahon A.P."/>
        </authorList>
    </citation>
    <scope>FUNCTION</scope>
</reference>
<reference key="7">
    <citation type="journal article" date="2009" name="Genesis">
        <title>Generation of an allele to inactivate Wnt4 gene function conditionally in the mouse.</title>
        <authorList>
            <person name="Shan J."/>
            <person name="Jokela T."/>
            <person name="Peltoketo H."/>
            <person name="Vainio S."/>
        </authorList>
    </citation>
    <scope>FUNCTION</scope>
    <scope>DISRUPTION PHENOTYPE</scope>
</reference>
<reference key="8">
    <citation type="journal article" date="2015" name="Dev. Biol.">
        <title>Wnt4 is essential to normal mammalian lung development.</title>
        <authorList>
            <person name="Caprioli A."/>
            <person name="Villasenor A."/>
            <person name="Wylie L.A."/>
            <person name="Braitsch C."/>
            <person name="Marty-Santos L."/>
            <person name="Barry D."/>
            <person name="Karner C.M."/>
            <person name="Fu S."/>
            <person name="Meadows S.M."/>
            <person name="Carroll T.J."/>
            <person name="Cleaver O."/>
        </authorList>
    </citation>
    <scope>FUNCTION</scope>
    <scope>DISRUPTION PHENOTYPE</scope>
</reference>
<proteinExistence type="evidence at protein level"/>